<comment type="subcellular location">
    <subcellularLocation>
        <location evidence="3">Endoplasmic reticulum</location>
    </subcellularLocation>
    <subcellularLocation>
        <location evidence="1">Membrane</location>
        <topology evidence="1">Multi-pass membrane protein</topology>
    </subcellularLocation>
</comment>
<comment type="similarity">
    <text evidence="1">Belongs to the major facilitator superfamily. Allantoate permease family.</text>
</comment>
<proteinExistence type="inferred from homology"/>
<gene>
    <name type="ORF">SPCC757.13</name>
</gene>
<organism>
    <name type="scientific">Schizosaccharomyces pombe (strain 972 / ATCC 24843)</name>
    <name type="common">Fission yeast</name>
    <dbReference type="NCBI Taxonomy" id="284812"/>
    <lineage>
        <taxon>Eukaryota</taxon>
        <taxon>Fungi</taxon>
        <taxon>Dikarya</taxon>
        <taxon>Ascomycota</taxon>
        <taxon>Taphrinomycotina</taxon>
        <taxon>Schizosaccharomycetes</taxon>
        <taxon>Schizosaccharomycetales</taxon>
        <taxon>Schizosaccharomycetaceae</taxon>
        <taxon>Schizosaccharomyces</taxon>
    </lineage>
</organism>
<evidence type="ECO:0000255" key="1"/>
<evidence type="ECO:0000256" key="2">
    <source>
        <dbReference type="SAM" id="MobiDB-lite"/>
    </source>
</evidence>
<evidence type="ECO:0000269" key="3">
    <source>
    </source>
</evidence>
<evidence type="ECO:0000305" key="4"/>
<evidence type="ECO:0000312" key="5">
    <source>
        <dbReference type="EMBL" id="CAA21238.1"/>
    </source>
</evidence>
<name>YJ7D_SCHPO</name>
<sequence>MSSITSRVSSRSSHELTEKKSGVTNDFKNSFEVGEVKRLPDAEGTADAVAQELLADDDFTYTAKEARRVLWKIDLVMMPVMCITYMIQYLDKTALSYAALYGMKTDTHIDGHTYSSMTTLFYAGYLVAQYPAAILMQKCRLSYFIFCNVFLWSAMVCLMAACRNGPSLLGLRFLAGIFEASITPAFINITAMWYRREEQPMRTLCWYAFNGIAQIIGSILSYGLGHIHGKVASWRYVFIVIGLMSLGWGVVFVFIPSNPSKARFLSSREKRIALERVRDNRTGLENKQFKWKHAYEAFLDPQVIMITLFTGVCMITNGIGVFSTLIIKGLGYNELHSAVLNMPLGAIEVAAMFISGVLCKVFKNGRLLIGVFMNCLTLAGCLMIWKIPDSNPYGRLVGVWFTMWVPASSALLLSLISSNVAGYTKKTVTSATVFVFYSVGNIVSPQLFKSGQTPEYIEGIQAMIVSLCIIIAIAFVLTGYYIYENKRRDRLLAEDPSLGESIKNEEFMDLTDRQQPKFRYRW</sequence>
<reference evidence="5" key="1">
    <citation type="journal article" date="2002" name="Nature">
        <title>The genome sequence of Schizosaccharomyces pombe.</title>
        <authorList>
            <person name="Wood V."/>
            <person name="Gwilliam R."/>
            <person name="Rajandream M.A."/>
            <person name="Lyne M.H."/>
            <person name="Lyne R."/>
            <person name="Stewart A."/>
            <person name="Sgouros J.G."/>
            <person name="Peat N."/>
            <person name="Hayles J."/>
            <person name="Baker S.G."/>
            <person name="Basham D."/>
            <person name="Bowman S."/>
            <person name="Brooks K."/>
            <person name="Brown D."/>
            <person name="Brown S."/>
            <person name="Chillingworth T."/>
            <person name="Churcher C.M."/>
            <person name="Collins M."/>
            <person name="Connor R."/>
            <person name="Cronin A."/>
            <person name="Davis P."/>
            <person name="Feltwell T."/>
            <person name="Fraser A."/>
            <person name="Gentles S."/>
            <person name="Goble A."/>
            <person name="Hamlin N."/>
            <person name="Harris D.E."/>
            <person name="Hidalgo J."/>
            <person name="Hodgson G."/>
            <person name="Holroyd S."/>
            <person name="Hornsby T."/>
            <person name="Howarth S."/>
            <person name="Huckle E.J."/>
            <person name="Hunt S."/>
            <person name="Jagels K."/>
            <person name="James K.D."/>
            <person name="Jones L."/>
            <person name="Jones M."/>
            <person name="Leather S."/>
            <person name="McDonald S."/>
            <person name="McLean J."/>
            <person name="Mooney P."/>
            <person name="Moule S."/>
            <person name="Mungall K.L."/>
            <person name="Murphy L.D."/>
            <person name="Niblett D."/>
            <person name="Odell C."/>
            <person name="Oliver K."/>
            <person name="O'Neil S."/>
            <person name="Pearson D."/>
            <person name="Quail M.A."/>
            <person name="Rabbinowitsch E."/>
            <person name="Rutherford K.M."/>
            <person name="Rutter S."/>
            <person name="Saunders D."/>
            <person name="Seeger K."/>
            <person name="Sharp S."/>
            <person name="Skelton J."/>
            <person name="Simmonds M.N."/>
            <person name="Squares R."/>
            <person name="Squares S."/>
            <person name="Stevens K."/>
            <person name="Taylor K."/>
            <person name="Taylor R.G."/>
            <person name="Tivey A."/>
            <person name="Walsh S.V."/>
            <person name="Warren T."/>
            <person name="Whitehead S."/>
            <person name="Woodward J.R."/>
            <person name="Volckaert G."/>
            <person name="Aert R."/>
            <person name="Robben J."/>
            <person name="Grymonprez B."/>
            <person name="Weltjens I."/>
            <person name="Vanstreels E."/>
            <person name="Rieger M."/>
            <person name="Schaefer M."/>
            <person name="Mueller-Auer S."/>
            <person name="Gabel C."/>
            <person name="Fuchs M."/>
            <person name="Duesterhoeft A."/>
            <person name="Fritzc C."/>
            <person name="Holzer E."/>
            <person name="Moestl D."/>
            <person name="Hilbert H."/>
            <person name="Borzym K."/>
            <person name="Langer I."/>
            <person name="Beck A."/>
            <person name="Lehrach H."/>
            <person name="Reinhardt R."/>
            <person name="Pohl T.M."/>
            <person name="Eger P."/>
            <person name="Zimmermann W."/>
            <person name="Wedler H."/>
            <person name="Wambutt R."/>
            <person name="Purnelle B."/>
            <person name="Goffeau A."/>
            <person name="Cadieu E."/>
            <person name="Dreano S."/>
            <person name="Gloux S."/>
            <person name="Lelaure V."/>
            <person name="Mottier S."/>
            <person name="Galibert F."/>
            <person name="Aves S.J."/>
            <person name="Xiang Z."/>
            <person name="Hunt C."/>
            <person name="Moore K."/>
            <person name="Hurst S.M."/>
            <person name="Lucas M."/>
            <person name="Rochet M."/>
            <person name="Gaillardin C."/>
            <person name="Tallada V.A."/>
            <person name="Garzon A."/>
            <person name="Thode G."/>
            <person name="Daga R.R."/>
            <person name="Cruzado L."/>
            <person name="Jimenez J."/>
            <person name="Sanchez M."/>
            <person name="del Rey F."/>
            <person name="Benito J."/>
            <person name="Dominguez A."/>
            <person name="Revuelta J.L."/>
            <person name="Moreno S."/>
            <person name="Armstrong J."/>
            <person name="Forsburg S.L."/>
            <person name="Cerutti L."/>
            <person name="Lowe T."/>
            <person name="McCombie W.R."/>
            <person name="Paulsen I."/>
            <person name="Potashkin J."/>
            <person name="Shpakovski G.V."/>
            <person name="Ussery D."/>
            <person name="Barrell B.G."/>
            <person name="Nurse P."/>
        </authorList>
    </citation>
    <scope>NUCLEOTIDE SEQUENCE [LARGE SCALE GENOMIC DNA]</scope>
    <source>
        <strain>972 / ATCC 24843</strain>
    </source>
</reference>
<reference evidence="4" key="2">
    <citation type="journal article" date="2006" name="Nat. Biotechnol.">
        <title>ORFeome cloning and global analysis of protein localization in the fission yeast Schizosaccharomyces pombe.</title>
        <authorList>
            <person name="Matsuyama A."/>
            <person name="Arai R."/>
            <person name="Yashiroda Y."/>
            <person name="Shirai A."/>
            <person name="Kamata A."/>
            <person name="Sekido S."/>
            <person name="Kobayashi Y."/>
            <person name="Hashimoto A."/>
            <person name="Hamamoto M."/>
            <person name="Hiraoka Y."/>
            <person name="Horinouchi S."/>
            <person name="Yoshida M."/>
        </authorList>
    </citation>
    <scope>SUBCELLULAR LOCATION [LARGE SCALE ANALYSIS]</scope>
</reference>
<dbReference type="EMBL" id="CU329672">
    <property type="protein sequence ID" value="CAA21238.1"/>
    <property type="molecule type" value="Genomic_DNA"/>
</dbReference>
<dbReference type="PIR" id="T41604">
    <property type="entry name" value="T41604"/>
</dbReference>
<dbReference type="RefSeq" id="NP_587688.1">
    <property type="nucleotide sequence ID" value="NM_001022683.2"/>
</dbReference>
<dbReference type="SMR" id="O74923"/>
<dbReference type="FunCoup" id="O74923">
    <property type="interactions" value="55"/>
</dbReference>
<dbReference type="STRING" id="284812.O74923"/>
<dbReference type="iPTMnet" id="O74923"/>
<dbReference type="PaxDb" id="4896-SPCC757.13.1"/>
<dbReference type="EnsemblFungi" id="SPCC757.13.1">
    <property type="protein sequence ID" value="SPCC757.13.1:pep"/>
    <property type="gene ID" value="SPCC757.13"/>
</dbReference>
<dbReference type="KEGG" id="spo:2539039"/>
<dbReference type="PomBase" id="SPCC757.13"/>
<dbReference type="VEuPathDB" id="FungiDB:SPCC757.13"/>
<dbReference type="eggNOG" id="KOG2533">
    <property type="taxonomic scope" value="Eukaryota"/>
</dbReference>
<dbReference type="HOGENOM" id="CLU_001265_0_5_1"/>
<dbReference type="InParanoid" id="O74923"/>
<dbReference type="OMA" id="TYMIQYL"/>
<dbReference type="PhylomeDB" id="O74923"/>
<dbReference type="PRO" id="PR:O74923"/>
<dbReference type="Proteomes" id="UP000002485">
    <property type="component" value="Chromosome III"/>
</dbReference>
<dbReference type="GO" id="GO:0005783">
    <property type="term" value="C:endoplasmic reticulum"/>
    <property type="evidence" value="ECO:0007005"/>
    <property type="project" value="PomBase"/>
</dbReference>
<dbReference type="GO" id="GO:0016020">
    <property type="term" value="C:membrane"/>
    <property type="evidence" value="ECO:0000318"/>
    <property type="project" value="GO_Central"/>
</dbReference>
<dbReference type="GO" id="GO:0071916">
    <property type="term" value="F:dipeptide transmembrane transporter activity"/>
    <property type="evidence" value="ECO:0000255"/>
    <property type="project" value="PomBase"/>
</dbReference>
<dbReference type="GO" id="GO:0022857">
    <property type="term" value="F:transmembrane transporter activity"/>
    <property type="evidence" value="ECO:0000318"/>
    <property type="project" value="GO_Central"/>
</dbReference>
<dbReference type="GO" id="GO:0035442">
    <property type="term" value="P:dipeptide transmembrane transport"/>
    <property type="evidence" value="ECO:0000255"/>
    <property type="project" value="PomBase"/>
</dbReference>
<dbReference type="CDD" id="cd17327">
    <property type="entry name" value="MFS_FEN2_like"/>
    <property type="match status" value="1"/>
</dbReference>
<dbReference type="FunFam" id="1.20.1250.20:FF:000064">
    <property type="entry name" value="MFS allantoate transporter"/>
    <property type="match status" value="1"/>
</dbReference>
<dbReference type="Gene3D" id="1.20.1250.20">
    <property type="entry name" value="MFS general substrate transporter like domains"/>
    <property type="match status" value="2"/>
</dbReference>
<dbReference type="InterPro" id="IPR011701">
    <property type="entry name" value="MFS"/>
</dbReference>
<dbReference type="InterPro" id="IPR020846">
    <property type="entry name" value="MFS_dom"/>
</dbReference>
<dbReference type="InterPro" id="IPR036259">
    <property type="entry name" value="MFS_trans_sf"/>
</dbReference>
<dbReference type="PANTHER" id="PTHR43791:SF70">
    <property type="entry name" value="MAJOR FACILITATOR SUPERFAMILY (MFS) PROFILE DOMAIN-CONTAINING PROTEIN"/>
    <property type="match status" value="1"/>
</dbReference>
<dbReference type="PANTHER" id="PTHR43791">
    <property type="entry name" value="PERMEASE-RELATED"/>
    <property type="match status" value="1"/>
</dbReference>
<dbReference type="Pfam" id="PF07690">
    <property type="entry name" value="MFS_1"/>
    <property type="match status" value="1"/>
</dbReference>
<dbReference type="SUPFAM" id="SSF103473">
    <property type="entry name" value="MFS general substrate transporter"/>
    <property type="match status" value="1"/>
</dbReference>
<dbReference type="PROSITE" id="PS50850">
    <property type="entry name" value="MFS"/>
    <property type="match status" value="1"/>
</dbReference>
<feature type="chain" id="PRO_0000372785" description="Uncharacterized transporter C757.13">
    <location>
        <begin position="1"/>
        <end position="522"/>
    </location>
</feature>
<feature type="transmembrane region" description="Helical" evidence="1">
    <location>
        <begin position="69"/>
        <end position="89"/>
    </location>
</feature>
<feature type="transmembrane region" description="Helical" evidence="1">
    <location>
        <begin position="116"/>
        <end position="136"/>
    </location>
</feature>
<feature type="transmembrane region" description="Helical" evidence="1">
    <location>
        <begin position="141"/>
        <end position="161"/>
    </location>
</feature>
<feature type="transmembrane region" description="Helical" evidence="1">
    <location>
        <begin position="173"/>
        <end position="193"/>
    </location>
</feature>
<feature type="transmembrane region" description="Helical" evidence="1">
    <location>
        <begin position="204"/>
        <end position="224"/>
    </location>
</feature>
<feature type="transmembrane region" description="Helical" evidence="1">
    <location>
        <begin position="236"/>
        <end position="256"/>
    </location>
</feature>
<feature type="transmembrane region" description="Helical" evidence="1">
    <location>
        <begin position="303"/>
        <end position="323"/>
    </location>
</feature>
<feature type="transmembrane region" description="Helical" evidence="1">
    <location>
        <begin position="338"/>
        <end position="358"/>
    </location>
</feature>
<feature type="transmembrane region" description="Helical" evidence="1">
    <location>
        <begin position="367"/>
        <end position="387"/>
    </location>
</feature>
<feature type="transmembrane region" description="Helical" evidence="1">
    <location>
        <begin position="396"/>
        <end position="416"/>
    </location>
</feature>
<feature type="transmembrane region" description="Helical" evidence="1">
    <location>
        <begin position="428"/>
        <end position="448"/>
    </location>
</feature>
<feature type="transmembrane region" description="Helical" evidence="1">
    <location>
        <begin position="462"/>
        <end position="482"/>
    </location>
</feature>
<feature type="region of interest" description="Disordered" evidence="2">
    <location>
        <begin position="1"/>
        <end position="20"/>
    </location>
</feature>
<feature type="compositionally biased region" description="Low complexity" evidence="2">
    <location>
        <begin position="1"/>
        <end position="11"/>
    </location>
</feature>
<keyword id="KW-0256">Endoplasmic reticulum</keyword>
<keyword id="KW-0472">Membrane</keyword>
<keyword id="KW-1185">Reference proteome</keyword>
<keyword id="KW-0812">Transmembrane</keyword>
<keyword id="KW-1133">Transmembrane helix</keyword>
<keyword id="KW-0813">Transport</keyword>
<protein>
    <recommendedName>
        <fullName>Uncharacterized transporter C757.13</fullName>
    </recommendedName>
</protein>
<accession>O74923</accession>